<reference key="1">
    <citation type="journal article" date="2006" name="Proc. Natl. Acad. Sci. U.S.A.">
        <title>Comparative genomics of the lactic acid bacteria.</title>
        <authorList>
            <person name="Makarova K.S."/>
            <person name="Slesarev A."/>
            <person name="Wolf Y.I."/>
            <person name="Sorokin A."/>
            <person name="Mirkin B."/>
            <person name="Koonin E.V."/>
            <person name="Pavlov A."/>
            <person name="Pavlova N."/>
            <person name="Karamychev V."/>
            <person name="Polouchine N."/>
            <person name="Shakhova V."/>
            <person name="Grigoriev I."/>
            <person name="Lou Y."/>
            <person name="Rohksar D."/>
            <person name="Lucas S."/>
            <person name="Huang K."/>
            <person name="Goodstein D.M."/>
            <person name="Hawkins T."/>
            <person name="Plengvidhya V."/>
            <person name="Welker D."/>
            <person name="Hughes J."/>
            <person name="Goh Y."/>
            <person name="Benson A."/>
            <person name="Baldwin K."/>
            <person name="Lee J.-H."/>
            <person name="Diaz-Muniz I."/>
            <person name="Dosti B."/>
            <person name="Smeianov V."/>
            <person name="Wechter W."/>
            <person name="Barabote R."/>
            <person name="Lorca G."/>
            <person name="Altermann E."/>
            <person name="Barrangou R."/>
            <person name="Ganesan B."/>
            <person name="Xie Y."/>
            <person name="Rawsthorne H."/>
            <person name="Tamir D."/>
            <person name="Parker C."/>
            <person name="Breidt F."/>
            <person name="Broadbent J.R."/>
            <person name="Hutkins R."/>
            <person name="O'Sullivan D."/>
            <person name="Steele J."/>
            <person name="Unlu G."/>
            <person name="Saier M.H. Jr."/>
            <person name="Klaenhammer T."/>
            <person name="Richardson P."/>
            <person name="Kozyavkin S."/>
            <person name="Weimer B.C."/>
            <person name="Mills D.A."/>
        </authorList>
    </citation>
    <scope>NUCLEOTIDE SEQUENCE [LARGE SCALE GENOMIC DNA]</scope>
    <source>
        <strain>SK11</strain>
    </source>
</reference>
<name>RL332_LACLS</name>
<proteinExistence type="inferred from homology"/>
<protein>
    <recommendedName>
        <fullName evidence="1">Large ribosomal subunit protein bL33B</fullName>
    </recommendedName>
    <alternativeName>
        <fullName evidence="1">50S ribosomal protein L33 2</fullName>
    </alternativeName>
</protein>
<sequence length="48" mass="5508">MRVKITLICSSCGNKNYISSKNKATHPEKVETMKFCPKERIVTLHREG</sequence>
<accession>Q030W3</accession>
<keyword id="KW-0687">Ribonucleoprotein</keyword>
<keyword id="KW-0689">Ribosomal protein</keyword>
<organism>
    <name type="scientific">Lactococcus lactis subsp. cremoris (strain SK11)</name>
    <dbReference type="NCBI Taxonomy" id="272622"/>
    <lineage>
        <taxon>Bacteria</taxon>
        <taxon>Bacillati</taxon>
        <taxon>Bacillota</taxon>
        <taxon>Bacilli</taxon>
        <taxon>Lactobacillales</taxon>
        <taxon>Streptococcaceae</taxon>
        <taxon>Lactococcus</taxon>
        <taxon>Lactococcus cremoris subsp. cremoris</taxon>
    </lineage>
</organism>
<comment type="similarity">
    <text evidence="1">Belongs to the bacterial ribosomal protein bL33 family.</text>
</comment>
<dbReference type="EMBL" id="CP000425">
    <property type="protein sequence ID" value="ABJ72259.1"/>
    <property type="molecule type" value="Genomic_DNA"/>
</dbReference>
<dbReference type="SMR" id="Q030W3"/>
<dbReference type="KEGG" id="llc:LACR_0694"/>
<dbReference type="HOGENOM" id="CLU_190949_0_2_9"/>
<dbReference type="Proteomes" id="UP000000240">
    <property type="component" value="Chromosome"/>
</dbReference>
<dbReference type="GO" id="GO:0005737">
    <property type="term" value="C:cytoplasm"/>
    <property type="evidence" value="ECO:0007669"/>
    <property type="project" value="UniProtKB-ARBA"/>
</dbReference>
<dbReference type="GO" id="GO:1990904">
    <property type="term" value="C:ribonucleoprotein complex"/>
    <property type="evidence" value="ECO:0007669"/>
    <property type="project" value="UniProtKB-KW"/>
</dbReference>
<dbReference type="GO" id="GO:0005840">
    <property type="term" value="C:ribosome"/>
    <property type="evidence" value="ECO:0007669"/>
    <property type="project" value="UniProtKB-KW"/>
</dbReference>
<dbReference type="GO" id="GO:0003735">
    <property type="term" value="F:structural constituent of ribosome"/>
    <property type="evidence" value="ECO:0007669"/>
    <property type="project" value="InterPro"/>
</dbReference>
<dbReference type="GO" id="GO:0006412">
    <property type="term" value="P:translation"/>
    <property type="evidence" value="ECO:0007669"/>
    <property type="project" value="UniProtKB-UniRule"/>
</dbReference>
<dbReference type="Gene3D" id="2.20.28.120">
    <property type="entry name" value="Ribosomal protein L33"/>
    <property type="match status" value="1"/>
</dbReference>
<dbReference type="HAMAP" id="MF_00294">
    <property type="entry name" value="Ribosomal_bL33"/>
    <property type="match status" value="1"/>
</dbReference>
<dbReference type="InterPro" id="IPR001705">
    <property type="entry name" value="Ribosomal_bL33"/>
</dbReference>
<dbReference type="InterPro" id="IPR018264">
    <property type="entry name" value="Ribosomal_bL33_CS"/>
</dbReference>
<dbReference type="InterPro" id="IPR038584">
    <property type="entry name" value="Ribosomal_bL33_sf"/>
</dbReference>
<dbReference type="InterPro" id="IPR011332">
    <property type="entry name" value="Ribosomal_zn-bd"/>
</dbReference>
<dbReference type="NCBIfam" id="NF001764">
    <property type="entry name" value="PRK00504.1"/>
    <property type="match status" value="1"/>
</dbReference>
<dbReference type="NCBIfam" id="NF001860">
    <property type="entry name" value="PRK00595.1"/>
    <property type="match status" value="1"/>
</dbReference>
<dbReference type="NCBIfam" id="TIGR01023">
    <property type="entry name" value="rpmG_bact"/>
    <property type="match status" value="1"/>
</dbReference>
<dbReference type="PANTHER" id="PTHR43168">
    <property type="entry name" value="50S RIBOSOMAL PROTEIN L33, CHLOROPLASTIC"/>
    <property type="match status" value="1"/>
</dbReference>
<dbReference type="PANTHER" id="PTHR43168:SF6">
    <property type="entry name" value="LARGE RIBOSOMAL SUBUNIT PROTEIN BL33A"/>
    <property type="match status" value="1"/>
</dbReference>
<dbReference type="Pfam" id="PF00471">
    <property type="entry name" value="Ribosomal_L33"/>
    <property type="match status" value="1"/>
</dbReference>
<dbReference type="SUPFAM" id="SSF57829">
    <property type="entry name" value="Zn-binding ribosomal proteins"/>
    <property type="match status" value="1"/>
</dbReference>
<dbReference type="PROSITE" id="PS00582">
    <property type="entry name" value="RIBOSOMAL_L33"/>
    <property type="match status" value="1"/>
</dbReference>
<feature type="chain" id="PRO_0000356519" description="Large ribosomal subunit protein bL33B">
    <location>
        <begin position="1"/>
        <end position="48"/>
    </location>
</feature>
<evidence type="ECO:0000255" key="1">
    <source>
        <dbReference type="HAMAP-Rule" id="MF_00294"/>
    </source>
</evidence>
<gene>
    <name evidence="1" type="primary">rpmG2</name>
    <name type="ordered locus">LACR_0694</name>
</gene>